<evidence type="ECO:0000250" key="1">
    <source>
        <dbReference type="UniProtKB" id="Q9Y2G5"/>
    </source>
</evidence>
<evidence type="ECO:0000255" key="2"/>
<evidence type="ECO:0000269" key="3">
    <source>
    </source>
</evidence>
<evidence type="ECO:0000269" key="4">
    <source>
    </source>
</evidence>
<evidence type="ECO:0000269" key="5">
    <source>
    </source>
</evidence>
<evidence type="ECO:0000305" key="6"/>
<evidence type="ECO:0000312" key="7">
    <source>
        <dbReference type="EMBL" id="AAL65193.1"/>
    </source>
</evidence>
<evidence type="ECO:0007744" key="8">
    <source>
        <dbReference type="PDB" id="5FOE"/>
    </source>
</evidence>
<evidence type="ECO:0007829" key="9">
    <source>
        <dbReference type="PDB" id="5FOE"/>
    </source>
</evidence>
<reference key="1">
    <citation type="journal article" date="2004" name="Genomics">
        <title>The Caenorhabditis elegans ortholog of C21orf80, a potential new protein O-fucosyltransferase, is required for normal development.</title>
        <authorList>
            <person name="Menzel O."/>
            <person name="Vellai T."/>
            <person name="Takacs-Vellai K."/>
            <person name="Reymond A."/>
            <person name="Mueller F."/>
            <person name="Antonarakis S.E."/>
            <person name="Guipponi M."/>
        </authorList>
    </citation>
    <scope>NUCLEOTIDE SEQUENCE [MRNA]</scope>
    <scope>FUNCTION</scope>
    <scope>SUBCELLULAR LOCATION</scope>
    <scope>TISSUE SPECIFICITY</scope>
    <scope>DEVELOPMENTAL STAGE</scope>
</reference>
<reference key="2">
    <citation type="journal article" date="1998" name="Science">
        <title>Genome sequence of the nematode C. elegans: a platform for investigating biology.</title>
        <authorList>
            <consortium name="The C. elegans sequencing consortium"/>
        </authorList>
    </citation>
    <scope>NUCLEOTIDE SEQUENCE [LARGE SCALE GENOMIC DNA]</scope>
    <source>
        <strain>Bristol N2</strain>
    </source>
</reference>
<reference key="3">
    <citation type="journal article" date="2007" name="Mol. Cell. Proteomics">
        <title>Proteomics reveals N-linked glycoprotein diversity in Caenorhabditis elegans and suggests an atypical translocation mechanism for integral membrane proteins.</title>
        <authorList>
            <person name="Kaji H."/>
            <person name="Kamiie J."/>
            <person name="Kawakami H."/>
            <person name="Kido K."/>
            <person name="Yamauchi Y."/>
            <person name="Shinkawa T."/>
            <person name="Taoka M."/>
            <person name="Takahashi N."/>
            <person name="Isobe T."/>
        </authorList>
    </citation>
    <scope>GLYCOSYLATION [LARGE SCALE ANALYSIS] AT ASN-205</scope>
    <scope>IDENTIFICATION BY MASS SPECTROMETRY</scope>
    <source>
        <strain>Bristol N2</strain>
    </source>
</reference>
<reference evidence="8" key="4">
    <citation type="journal article" date="2016" name="Nat. Chem. Biol.">
        <title>A proactive role of water molecules in acceptor recognition by protein O-fucosyltransferase 2.</title>
        <authorList>
            <person name="Valero-Gonzalez J."/>
            <person name="Leonhard-Melief C."/>
            <person name="Lira-Navarrete E."/>
            <person name="Jimenez-Oses G."/>
            <person name="Hernandez-Ruiz C."/>
            <person name="Pallares M.C."/>
            <person name="Yruela I."/>
            <person name="Vasudevan D."/>
            <person name="Lostao A."/>
            <person name="Corzana F."/>
            <person name="Takeuchi H."/>
            <person name="Haltiwanger R.S."/>
            <person name="Hurtado-Guerrero R."/>
        </authorList>
    </citation>
    <scope>X-RAY CRYSTALLOGRAPHY (1.98 ANGSTROMS) OF MUTANT LYS-298 AND LYS-299 IN COMPLEX WITH GDP AND HUMAN TSR1 TSR DOMAIN</scope>
    <scope>FUNCTION</scope>
    <scope>CATALYTIC ACTIVITY</scope>
    <scope>PATHWAY</scope>
    <scope>GLYCOSYLATION AT ASN-205</scope>
    <scope>DISULFIDE BONDS</scope>
</reference>
<organism evidence="7">
    <name type="scientific">Caenorhabditis elegans</name>
    <dbReference type="NCBI Taxonomy" id="6239"/>
    <lineage>
        <taxon>Eukaryota</taxon>
        <taxon>Metazoa</taxon>
        <taxon>Ecdysozoa</taxon>
        <taxon>Nematoda</taxon>
        <taxon>Chromadorea</taxon>
        <taxon>Rhabditida</taxon>
        <taxon>Rhabditina</taxon>
        <taxon>Rhabditomorpha</taxon>
        <taxon>Rhabditoidea</taxon>
        <taxon>Rhabditidae</taxon>
        <taxon>Peloderinae</taxon>
        <taxon>Caenorhabditis</taxon>
    </lineage>
</organism>
<proteinExistence type="evidence at protein level"/>
<comment type="function">
    <text evidence="1 3 5">Catalyzes the reaction that attaches fucose through an O-glycosidic linkage to a conserved serine or threonine residue in the consensus sequence C1-X-X-S/T-C2 of thrombospondin type I repeats (TSRs) where C1 and C2 are the first and second cysteines of the repeat, respectively (PubMed:15233996, PubMed:26854667). O-fucosylates members of several protein families including the ADAMTS superfamily and the thrombospondin (TSP) and spondin families (By similarity).</text>
</comment>
<comment type="catalytic activity">
    <reaction evidence="5">
        <text>L-seryl-[protein] + GDP-beta-L-fucose = 3-O-(alpha-L-fucosyl)-L-seryl-[protein] + GDP + H(+)</text>
        <dbReference type="Rhea" id="RHEA:63644"/>
        <dbReference type="Rhea" id="RHEA-COMP:9863"/>
        <dbReference type="Rhea" id="RHEA-COMP:17914"/>
        <dbReference type="ChEBI" id="CHEBI:15378"/>
        <dbReference type="ChEBI" id="CHEBI:29999"/>
        <dbReference type="ChEBI" id="CHEBI:57273"/>
        <dbReference type="ChEBI" id="CHEBI:58189"/>
        <dbReference type="ChEBI" id="CHEBI:189632"/>
        <dbReference type="EC" id="2.4.1.221"/>
    </reaction>
    <physiologicalReaction direction="left-to-right" evidence="5">
        <dbReference type="Rhea" id="RHEA:63645"/>
    </physiologicalReaction>
</comment>
<comment type="catalytic activity">
    <reaction evidence="5">
        <text>L-threonyl-[protein] + GDP-beta-L-fucose = 3-O-(alpha-L-fucosyl)-L-threonyl-[protein] + GDP + H(+)</text>
        <dbReference type="Rhea" id="RHEA:70491"/>
        <dbReference type="Rhea" id="RHEA-COMP:11060"/>
        <dbReference type="Rhea" id="RHEA-COMP:17915"/>
        <dbReference type="ChEBI" id="CHEBI:15378"/>
        <dbReference type="ChEBI" id="CHEBI:30013"/>
        <dbReference type="ChEBI" id="CHEBI:57273"/>
        <dbReference type="ChEBI" id="CHEBI:58189"/>
        <dbReference type="ChEBI" id="CHEBI:189631"/>
        <dbReference type="EC" id="2.4.1.221"/>
    </reaction>
    <physiologicalReaction direction="left-to-right" evidence="5">
        <dbReference type="Rhea" id="RHEA:70492"/>
    </physiologicalReaction>
</comment>
<comment type="pathway">
    <text evidence="5">Protein modification; protein glycosylation.</text>
</comment>
<comment type="subcellular location">
    <subcellularLocation>
        <location evidence="1">Endoplasmic reticulum</location>
    </subcellularLocation>
    <subcellularLocation>
        <location evidence="3">Golgi apparatus</location>
    </subcellularLocation>
    <text evidence="1">Mainly located in the endoplasmic reticulum.</text>
</comment>
<comment type="tissue specificity">
    <text evidence="3">Expressed in the anterior part of embryos, in the hypodermal and neuronal cells of the head. Expressed at different levels in a variety of cell types after hatching, including neuronal, hypodermal, muscle, intestinal, and somatic gonadal cells. Expressed in the nerve ring around the pharynx, in dorsal and ventral nerve cords, intestine, and a variety of hypodermal cells of L1-L3 larvae. Expressed in gonadal sheath cells, spermatheca, and tissues surrounding the vulva of adult hermaphrodites, and in the body wall muscle and hypodermal cells of adults of both sexes.</text>
</comment>
<comment type="developmental stage">
    <text evidence="3">Expressed starts at morphogenetic embryonic stages and continues throughout development.</text>
</comment>
<comment type="similarity">
    <text evidence="6">Belongs to the glycosyltransferase 68 family.</text>
</comment>
<gene>
    <name type="primary">pad-2</name>
    <name type="ORF">K10G9.3</name>
</gene>
<sequence>MHFFPIQLLVLFFAEKIAFAENSDQTVSRVDSNRYSVAAEKKFLLYDVNFGEGFNLRRDVYMRVANTVRSLRDSGENYILVLPPWGRLHHWKRMEVALSWRLFFDLESLNRFIPVIEFEDFLDENRPIDQVIYLQHYAEGWGTEYVRKFEKRSCLPPAESHYKQVEEFKWKGWFYSYEDVYSRNFQCVSIQGDSGTLKDLLKHSNFSESTSIMVDRAETILHEHYGEVDYWKARRSMRYSNDLVDVADAFRKKYLDSDDKRDKTKLVDDWTKEKPRRTAIGGPYLGIHWRRRDFLYARRAQLPTIPGTAKILQDLCKKLDLQKIYLATDAPDQEVDELKALLNGELEVYRFTDTQKLNDGQIAIIDQYLCAHAAYFIGSYESTFTFRIQEDREIIGFPISTTFNRLCPDTEPTCEQPAKWKIVY</sequence>
<dbReference type="EC" id="2.4.1.221" evidence="5"/>
<dbReference type="EMBL" id="AF455271">
    <property type="protein sequence ID" value="AAL65193.1"/>
    <property type="molecule type" value="mRNA"/>
</dbReference>
<dbReference type="EMBL" id="Z36282">
    <property type="protein sequence ID" value="CAD45602.1"/>
    <property type="molecule type" value="Genomic_DNA"/>
</dbReference>
<dbReference type="RefSeq" id="NP_001255070.1">
    <property type="nucleotide sequence ID" value="NM_001268141.4"/>
</dbReference>
<dbReference type="PDB" id="5FOE">
    <property type="method" value="X-ray"/>
    <property type="resolution" value="1.98 A"/>
    <property type="chains" value="A/B=1-424"/>
</dbReference>
<dbReference type="PDB" id="8AY1">
    <property type="method" value="X-ray"/>
    <property type="resolution" value="2.13 A"/>
    <property type="chains" value="A/B=39-424"/>
</dbReference>
<dbReference type="PDBsum" id="5FOE"/>
<dbReference type="PDBsum" id="8AY1"/>
<dbReference type="SMR" id="Q8WR51"/>
<dbReference type="FunCoup" id="Q8WR51">
    <property type="interactions" value="1074"/>
</dbReference>
<dbReference type="STRING" id="6239.K10G9.3b.1"/>
<dbReference type="CAZy" id="GT68">
    <property type="family name" value="Glycosyltransferase Family 68"/>
</dbReference>
<dbReference type="GlyCosmos" id="Q8WR51">
    <property type="glycosylation" value="1 site, No reported glycans"/>
</dbReference>
<dbReference type="iPTMnet" id="Q8WR51"/>
<dbReference type="PaxDb" id="6239-K10G9.3b"/>
<dbReference type="EnsemblMetazoa" id="K10G9.3a.1">
    <property type="protein sequence ID" value="K10G9.3a.1"/>
    <property type="gene ID" value="WBGene00010757"/>
</dbReference>
<dbReference type="GeneID" id="259529"/>
<dbReference type="KEGG" id="cel:CELE_K10G9.3"/>
<dbReference type="UCSC" id="K10G9.3">
    <property type="organism name" value="c. elegans"/>
</dbReference>
<dbReference type="AGR" id="WB:WBGene00010757"/>
<dbReference type="CTD" id="259529"/>
<dbReference type="WormBase" id="K10G9.3a">
    <property type="protein sequence ID" value="CE31715"/>
    <property type="gene ID" value="WBGene00010757"/>
    <property type="gene designation" value="pad-2"/>
</dbReference>
<dbReference type="eggNOG" id="ENOG502QPS6">
    <property type="taxonomic scope" value="Eukaryota"/>
</dbReference>
<dbReference type="GeneTree" id="ENSGT00390000007989"/>
<dbReference type="InParanoid" id="Q8WR51"/>
<dbReference type="OrthoDB" id="422368at2759"/>
<dbReference type="PhylomeDB" id="Q8WR51"/>
<dbReference type="BRENDA" id="2.4.1.221">
    <property type="organism ID" value="1045"/>
</dbReference>
<dbReference type="Reactome" id="R-CEL-5173214">
    <property type="pathway name" value="O-glycosylation of TSR domain-containing proteins"/>
</dbReference>
<dbReference type="UniPathway" id="UPA00378"/>
<dbReference type="PRO" id="PR:Q8WR51"/>
<dbReference type="Proteomes" id="UP000001940">
    <property type="component" value="Chromosome III"/>
</dbReference>
<dbReference type="Bgee" id="WBGene00010757">
    <property type="expression patterns" value="Expressed in embryo and 3 other cell types or tissues"/>
</dbReference>
<dbReference type="ExpressionAtlas" id="Q8WR51">
    <property type="expression patterns" value="baseline"/>
</dbReference>
<dbReference type="GO" id="GO:0005783">
    <property type="term" value="C:endoplasmic reticulum"/>
    <property type="evidence" value="ECO:0007669"/>
    <property type="project" value="UniProtKB-SubCell"/>
</dbReference>
<dbReference type="GO" id="GO:0005794">
    <property type="term" value="C:Golgi apparatus"/>
    <property type="evidence" value="ECO:0007669"/>
    <property type="project" value="UniProtKB-SubCell"/>
</dbReference>
<dbReference type="GO" id="GO:0046922">
    <property type="term" value="F:peptide-O-fucosyltransferase activity"/>
    <property type="evidence" value="ECO:0000314"/>
    <property type="project" value="UniProtKB"/>
</dbReference>
<dbReference type="GO" id="GO:0006004">
    <property type="term" value="P:fucose metabolic process"/>
    <property type="evidence" value="ECO:0007669"/>
    <property type="project" value="UniProtKB-KW"/>
</dbReference>
<dbReference type="GO" id="GO:0036066">
    <property type="term" value="P:protein O-linked fucosylation"/>
    <property type="evidence" value="ECO:0000314"/>
    <property type="project" value="UniProtKB"/>
</dbReference>
<dbReference type="CDD" id="cd11298">
    <property type="entry name" value="O-FucT-2"/>
    <property type="match status" value="1"/>
</dbReference>
<dbReference type="FunFam" id="3.40.50.11340:FF:000007">
    <property type="entry name" value="GDP-fucose protein O-fucosyltransferase 2"/>
    <property type="match status" value="1"/>
</dbReference>
<dbReference type="FunFam" id="3.40.50.11350:FF:000002">
    <property type="entry name" value="GDP-fucose protein O-fucosyltransferase 2"/>
    <property type="match status" value="1"/>
</dbReference>
<dbReference type="Gene3D" id="3.40.50.11340">
    <property type="match status" value="1"/>
</dbReference>
<dbReference type="Gene3D" id="3.40.50.11350">
    <property type="match status" value="1"/>
</dbReference>
<dbReference type="InterPro" id="IPR019378">
    <property type="entry name" value="GDP-Fuc_O-FucTrfase"/>
</dbReference>
<dbReference type="InterPro" id="IPR045130">
    <property type="entry name" value="OFUT2-like"/>
</dbReference>
<dbReference type="PANTHER" id="PTHR13398">
    <property type="entry name" value="GDP-FUCOSE PROTEIN O-FUCOSYLTRANSFERASE 2"/>
    <property type="match status" value="1"/>
</dbReference>
<dbReference type="PANTHER" id="PTHR13398:SF0">
    <property type="entry name" value="GDP-FUCOSE PROTEIN O-FUCOSYLTRANSFERASE 2"/>
    <property type="match status" value="1"/>
</dbReference>
<dbReference type="Pfam" id="PF10250">
    <property type="entry name" value="O-FucT"/>
    <property type="match status" value="1"/>
</dbReference>
<name>OFUT2_CAEEL</name>
<feature type="signal peptide" evidence="2">
    <location>
        <begin position="1"/>
        <end position="20"/>
    </location>
</feature>
<feature type="chain" id="PRO_0000012157" description="GDP-fucose protein O-fucosyltransferase 2">
    <location>
        <begin position="21"/>
        <end position="424"/>
    </location>
</feature>
<feature type="active site" description="Proton acceptor" evidence="1">
    <location>
        <position position="52"/>
    </location>
</feature>
<feature type="binding site" evidence="5 8">
    <location>
        <begin position="51"/>
        <end position="55"/>
    </location>
    <ligand>
        <name>GDP-beta-L-fucose</name>
        <dbReference type="ChEBI" id="CHEBI:57273"/>
    </ligand>
</feature>
<feature type="binding site" evidence="5 8">
    <location>
        <begin position="288"/>
        <end position="290"/>
    </location>
    <ligand>
        <name>GDP-beta-L-fucose</name>
        <dbReference type="ChEBI" id="CHEBI:57273"/>
    </ligand>
</feature>
<feature type="binding site" evidence="5 8">
    <location>
        <position position="366"/>
    </location>
    <ligand>
        <name>GDP-beta-L-fucose</name>
        <dbReference type="ChEBI" id="CHEBI:57273"/>
    </ligand>
</feature>
<feature type="binding site" evidence="5 8">
    <location>
        <begin position="383"/>
        <end position="384"/>
    </location>
    <ligand>
        <name>GDP-beta-L-fucose</name>
        <dbReference type="ChEBI" id="CHEBI:57273"/>
    </ligand>
</feature>
<feature type="site" description="Essential for catalytic activity" evidence="1">
    <location>
        <position position="391"/>
    </location>
</feature>
<feature type="glycosylation site" description="N-linked (GlcNAc...) asparagine" evidence="4 5">
    <location>
        <position position="205"/>
    </location>
</feature>
<feature type="disulfide bond" evidence="5 8">
    <location>
        <begin position="154"/>
        <end position="187"/>
    </location>
</feature>
<feature type="disulfide bond" evidence="5 8">
    <location>
        <begin position="407"/>
        <end position="414"/>
    </location>
</feature>
<feature type="strand" evidence="9">
    <location>
        <begin position="41"/>
        <end position="46"/>
    </location>
</feature>
<feature type="helix" evidence="9">
    <location>
        <begin position="54"/>
        <end position="73"/>
    </location>
</feature>
<feature type="strand" evidence="9">
    <location>
        <begin position="77"/>
        <end position="82"/>
    </location>
</feature>
<feature type="helix" evidence="9">
    <location>
        <begin position="100"/>
        <end position="102"/>
    </location>
</feature>
<feature type="helix" evidence="9">
    <location>
        <begin position="106"/>
        <end position="112"/>
    </location>
</feature>
<feature type="strand" evidence="9">
    <location>
        <begin position="115"/>
        <end position="117"/>
    </location>
</feature>
<feature type="helix" evidence="9">
    <location>
        <begin position="118"/>
        <end position="123"/>
    </location>
</feature>
<feature type="strand" evidence="9">
    <location>
        <begin position="130"/>
        <end position="132"/>
    </location>
</feature>
<feature type="strand" evidence="9">
    <location>
        <begin position="148"/>
        <end position="151"/>
    </location>
</feature>
<feature type="helix" evidence="9">
    <location>
        <begin position="158"/>
        <end position="161"/>
    </location>
</feature>
<feature type="strand" evidence="9">
    <location>
        <begin position="163"/>
        <end position="166"/>
    </location>
</feature>
<feature type="strand" evidence="9">
    <location>
        <begin position="169"/>
        <end position="171"/>
    </location>
</feature>
<feature type="helix" evidence="9">
    <location>
        <begin position="174"/>
        <end position="176"/>
    </location>
</feature>
<feature type="strand" evidence="9">
    <location>
        <begin position="188"/>
        <end position="191"/>
    </location>
</feature>
<feature type="helix" evidence="9">
    <location>
        <begin position="194"/>
        <end position="202"/>
    </location>
</feature>
<feature type="helix" evidence="9">
    <location>
        <begin position="204"/>
        <end position="206"/>
    </location>
</feature>
<feature type="strand" evidence="9">
    <location>
        <begin position="210"/>
        <end position="216"/>
    </location>
</feature>
<feature type="helix" evidence="9">
    <location>
        <begin position="217"/>
        <end position="219"/>
    </location>
</feature>
<feature type="helix" evidence="9">
    <location>
        <begin position="228"/>
        <end position="235"/>
    </location>
</feature>
<feature type="helix" evidence="9">
    <location>
        <begin position="241"/>
        <end position="255"/>
    </location>
</feature>
<feature type="helix" evidence="9">
    <location>
        <begin position="259"/>
        <end position="262"/>
    </location>
</feature>
<feature type="helix" evidence="9">
    <location>
        <begin position="270"/>
        <end position="272"/>
    </location>
</feature>
<feature type="strand" evidence="9">
    <location>
        <begin position="282"/>
        <end position="289"/>
    </location>
</feature>
<feature type="helix" evidence="9">
    <location>
        <begin position="292"/>
        <end position="296"/>
    </location>
</feature>
<feature type="helix" evidence="9">
    <location>
        <begin position="299"/>
        <end position="301"/>
    </location>
</feature>
<feature type="helix" evidence="9">
    <location>
        <begin position="305"/>
        <end position="319"/>
    </location>
</feature>
<feature type="strand" evidence="9">
    <location>
        <begin position="323"/>
        <end position="328"/>
    </location>
</feature>
<feature type="helix" evidence="9">
    <location>
        <begin position="332"/>
        <end position="340"/>
    </location>
</feature>
<feature type="strand" evidence="9">
    <location>
        <begin position="347"/>
        <end position="349"/>
    </location>
</feature>
<feature type="helix" evidence="9">
    <location>
        <begin position="359"/>
        <end position="371"/>
    </location>
</feature>
<feature type="strand" evidence="9">
    <location>
        <begin position="373"/>
        <end position="378"/>
    </location>
</feature>
<feature type="helix" evidence="9">
    <location>
        <begin position="383"/>
        <end position="395"/>
    </location>
</feature>
<feature type="helix" evidence="9">
    <location>
        <begin position="399"/>
        <end position="401"/>
    </location>
</feature>
<protein>
    <recommendedName>
        <fullName>GDP-fucose protein O-fucosyltransferase 2</fullName>
        <ecNumber evidence="5">2.4.1.221</ecNumber>
    </recommendedName>
    <alternativeName>
        <fullName>Patterning defective protein 2</fullName>
    </alternativeName>
    <alternativeName>
        <fullName>Peptide-O-fucosyltransferase 2</fullName>
        <shortName>O-FucT-2</shortName>
    </alternativeName>
</protein>
<keyword id="KW-0002">3D-structure</keyword>
<keyword id="KW-0119">Carbohydrate metabolism</keyword>
<keyword id="KW-1015">Disulfide bond</keyword>
<keyword id="KW-0256">Endoplasmic reticulum</keyword>
<keyword id="KW-0294">Fucose metabolism</keyword>
<keyword id="KW-0325">Glycoprotein</keyword>
<keyword id="KW-0328">Glycosyltransferase</keyword>
<keyword id="KW-0333">Golgi apparatus</keyword>
<keyword id="KW-1185">Reference proteome</keyword>
<keyword id="KW-0732">Signal</keyword>
<keyword id="KW-0808">Transferase</keyword>
<accession>Q8WR51</accession>